<accession>A0A324</accession>
<reference key="1">
    <citation type="journal article" date="2007" name="Plant Biotechnol. J.">
        <title>The complete nucleotide sequence of the coffee (Coffea arabica L.) chloroplast genome: organization and implications for biotechnology and phylogenetic relationships amongst angiosperms.</title>
        <authorList>
            <person name="Samson N."/>
            <person name="Bausher M.G."/>
            <person name="Lee S.-B."/>
            <person name="Jansen R.K."/>
            <person name="Daniell H."/>
        </authorList>
    </citation>
    <scope>NUCLEOTIDE SEQUENCE [LARGE SCALE GENOMIC DNA]</scope>
</reference>
<keyword id="KW-0150">Chloroplast</keyword>
<keyword id="KW-0934">Plastid</keyword>
<keyword id="KW-1185">Reference proteome</keyword>
<keyword id="KW-0687">Ribonucleoprotein</keyword>
<keyword id="KW-0689">Ribosomal protein</keyword>
<comment type="subcellular location">
    <subcellularLocation>
        <location>Plastid</location>
        <location>Chloroplast</location>
    </subcellularLocation>
</comment>
<comment type="similarity">
    <text evidence="1">Belongs to the universal ribosomal protein uS2 family.</text>
</comment>
<evidence type="ECO:0000305" key="1"/>
<protein>
    <recommendedName>
        <fullName evidence="1">Small ribosomal subunit protein uS2c</fullName>
    </recommendedName>
    <alternativeName>
        <fullName>30S ribosomal protein S2, chloroplastic</fullName>
    </alternativeName>
</protein>
<dbReference type="EMBL" id="EF044213">
    <property type="protein sequence ID" value="ABJ89668.1"/>
    <property type="molecule type" value="Genomic_DNA"/>
</dbReference>
<dbReference type="RefSeq" id="YP_817471.1">
    <property type="nucleotide sequence ID" value="NC_008535.1"/>
</dbReference>
<dbReference type="SMR" id="A0A324"/>
<dbReference type="GeneID" id="4421788"/>
<dbReference type="OrthoDB" id="565471at2759"/>
<dbReference type="Proteomes" id="UP000515148">
    <property type="component" value="Chloroplast Pltd"/>
</dbReference>
<dbReference type="GO" id="GO:0009507">
    <property type="term" value="C:chloroplast"/>
    <property type="evidence" value="ECO:0007669"/>
    <property type="project" value="UniProtKB-SubCell"/>
</dbReference>
<dbReference type="GO" id="GO:0005763">
    <property type="term" value="C:mitochondrial small ribosomal subunit"/>
    <property type="evidence" value="ECO:0007669"/>
    <property type="project" value="TreeGrafter"/>
</dbReference>
<dbReference type="GO" id="GO:0003735">
    <property type="term" value="F:structural constituent of ribosome"/>
    <property type="evidence" value="ECO:0007669"/>
    <property type="project" value="InterPro"/>
</dbReference>
<dbReference type="GO" id="GO:0006412">
    <property type="term" value="P:translation"/>
    <property type="evidence" value="ECO:0007669"/>
    <property type="project" value="UniProtKB-UniRule"/>
</dbReference>
<dbReference type="CDD" id="cd01425">
    <property type="entry name" value="RPS2"/>
    <property type="match status" value="1"/>
</dbReference>
<dbReference type="FunFam" id="3.40.50.10490:FF:000101">
    <property type="match status" value="1"/>
</dbReference>
<dbReference type="FunFam" id="1.10.287.610:FF:000001">
    <property type="entry name" value="30S ribosomal protein S2"/>
    <property type="match status" value="1"/>
</dbReference>
<dbReference type="Gene3D" id="3.40.50.10490">
    <property type="entry name" value="Glucose-6-phosphate isomerase like protein, domain 1"/>
    <property type="match status" value="1"/>
</dbReference>
<dbReference type="Gene3D" id="1.10.287.610">
    <property type="entry name" value="Helix hairpin bin"/>
    <property type="match status" value="1"/>
</dbReference>
<dbReference type="HAMAP" id="MF_00291_B">
    <property type="entry name" value="Ribosomal_uS2_B"/>
    <property type="match status" value="1"/>
</dbReference>
<dbReference type="InterPro" id="IPR001865">
    <property type="entry name" value="Ribosomal_uS2"/>
</dbReference>
<dbReference type="InterPro" id="IPR005706">
    <property type="entry name" value="Ribosomal_uS2_bac/mit/plastid"/>
</dbReference>
<dbReference type="InterPro" id="IPR018130">
    <property type="entry name" value="Ribosomal_uS2_CS"/>
</dbReference>
<dbReference type="InterPro" id="IPR023591">
    <property type="entry name" value="Ribosomal_uS2_flav_dom_sf"/>
</dbReference>
<dbReference type="NCBIfam" id="TIGR01011">
    <property type="entry name" value="rpsB_bact"/>
    <property type="match status" value="1"/>
</dbReference>
<dbReference type="PANTHER" id="PTHR12534">
    <property type="entry name" value="30S RIBOSOMAL PROTEIN S2 PROKARYOTIC AND ORGANELLAR"/>
    <property type="match status" value="1"/>
</dbReference>
<dbReference type="PANTHER" id="PTHR12534:SF0">
    <property type="entry name" value="SMALL RIBOSOMAL SUBUNIT PROTEIN US2M"/>
    <property type="match status" value="1"/>
</dbReference>
<dbReference type="Pfam" id="PF00318">
    <property type="entry name" value="Ribosomal_S2"/>
    <property type="match status" value="1"/>
</dbReference>
<dbReference type="PRINTS" id="PR00395">
    <property type="entry name" value="RIBOSOMALS2"/>
</dbReference>
<dbReference type="SUPFAM" id="SSF52313">
    <property type="entry name" value="Ribosomal protein S2"/>
    <property type="match status" value="1"/>
</dbReference>
<dbReference type="PROSITE" id="PS00962">
    <property type="entry name" value="RIBOSOMAL_S2_1"/>
    <property type="match status" value="1"/>
</dbReference>
<dbReference type="PROSITE" id="PS00963">
    <property type="entry name" value="RIBOSOMAL_S2_2"/>
    <property type="match status" value="1"/>
</dbReference>
<proteinExistence type="inferred from homology"/>
<geneLocation type="chloroplast"/>
<sequence length="236" mass="26969">MTRRYWNINLEEMMEAGVHFGHGTRKWNPKMEPYISAKRKGIHITNLTRTARFLSEACDLVFDAGSRGKQFLIVGTKNKAADSVAWAAIRARCHYVNKKWLGGMLTNWSTTETRLHKFRDLRMEQKTGRLNRLPKRDAAMLKRQLSRLQTYLGGIKYMTGLPDIVIIIDQHEEYTALRECITLGIPTICLIDTNCDPDLADISIPANDDAISSIRLILNKLVFAICEGRSSYIRNP</sequence>
<gene>
    <name type="primary">rps2</name>
</gene>
<feature type="chain" id="PRO_0000352103" description="Small ribosomal subunit protein uS2c">
    <location>
        <begin position="1"/>
        <end position="236"/>
    </location>
</feature>
<organism>
    <name type="scientific">Coffea arabica</name>
    <name type="common">Arabian coffee</name>
    <dbReference type="NCBI Taxonomy" id="13443"/>
    <lineage>
        <taxon>Eukaryota</taxon>
        <taxon>Viridiplantae</taxon>
        <taxon>Streptophyta</taxon>
        <taxon>Embryophyta</taxon>
        <taxon>Tracheophyta</taxon>
        <taxon>Spermatophyta</taxon>
        <taxon>Magnoliopsida</taxon>
        <taxon>eudicotyledons</taxon>
        <taxon>Gunneridae</taxon>
        <taxon>Pentapetalae</taxon>
        <taxon>asterids</taxon>
        <taxon>lamiids</taxon>
        <taxon>Gentianales</taxon>
        <taxon>Rubiaceae</taxon>
        <taxon>Ixoroideae</taxon>
        <taxon>Gardenieae complex</taxon>
        <taxon>Bertiereae - Coffeeae clade</taxon>
        <taxon>Coffeeae</taxon>
        <taxon>Coffea</taxon>
    </lineage>
</organism>
<name>RR2_COFAR</name>